<evidence type="ECO:0000255" key="1">
    <source>
        <dbReference type="HAMAP-Rule" id="MF_01462"/>
    </source>
</evidence>
<reference key="1">
    <citation type="journal article" date="2008" name="Environ. Microbiol.">
        <title>The complete genome sequence of Moorella thermoacetica (f. Clostridium thermoaceticum).</title>
        <authorList>
            <person name="Pierce E."/>
            <person name="Xie G."/>
            <person name="Barabote R.D."/>
            <person name="Saunders E."/>
            <person name="Han C.S."/>
            <person name="Detter J.C."/>
            <person name="Richardson P."/>
            <person name="Brettin T.S."/>
            <person name="Das A."/>
            <person name="Ljungdahl L.G."/>
            <person name="Ragsdale S.W."/>
        </authorList>
    </citation>
    <scope>NUCLEOTIDE SEQUENCE [LARGE SCALE GENOMIC DNA]</scope>
    <source>
        <strain>ATCC 39073 / JCM 9320</strain>
    </source>
</reference>
<sequence>MFRRTTWLTLYLLLAMAALARPAFAMHIAEGFLPFNWAAFWFIVVLPFWIWGLRSIRHTVKSNPGLKMLLGLAGAYTFVLSALKLPSVTGSCSHPTGIGLGAVLFGPAAMSILGGIVLLFQALLLAHGGLSTLGANTFSMAVVGPFVAYGLYRLVRKLKGSMPLAVFLAATLGDLMTYVTTSLQLALAFPAQAGGVVASMLKFMGIFAVTQLPLAISEGFLTVIVFNLLATYNKNDLEELSIMPGKTAAEGGPSRQYSR</sequence>
<dbReference type="EMBL" id="CP000232">
    <property type="protein sequence ID" value="ABC19536.1"/>
    <property type="molecule type" value="Genomic_DNA"/>
</dbReference>
<dbReference type="RefSeq" id="YP_430079.2">
    <property type="nucleotide sequence ID" value="NC_007644.1"/>
</dbReference>
<dbReference type="SMR" id="Q2RJ53"/>
<dbReference type="STRING" id="264732.Moth_1222"/>
<dbReference type="EnsemblBacteria" id="ABC19536">
    <property type="protein sequence ID" value="ABC19536"/>
    <property type="gene ID" value="Moth_1222"/>
</dbReference>
<dbReference type="KEGG" id="mta:Moth_1222"/>
<dbReference type="PATRIC" id="fig|264732.11.peg.1311"/>
<dbReference type="eggNOG" id="COG0310">
    <property type="taxonomic scope" value="Bacteria"/>
</dbReference>
<dbReference type="HOGENOM" id="CLU_052508_3_0_9"/>
<dbReference type="OrthoDB" id="9809846at2"/>
<dbReference type="UniPathway" id="UPA00148"/>
<dbReference type="GO" id="GO:0043190">
    <property type="term" value="C:ATP-binding cassette (ABC) transporter complex"/>
    <property type="evidence" value="ECO:0007669"/>
    <property type="project" value="InterPro"/>
</dbReference>
<dbReference type="GO" id="GO:0015087">
    <property type="term" value="F:cobalt ion transmembrane transporter activity"/>
    <property type="evidence" value="ECO:0007669"/>
    <property type="project" value="UniProtKB-UniRule"/>
</dbReference>
<dbReference type="GO" id="GO:0009236">
    <property type="term" value="P:cobalamin biosynthetic process"/>
    <property type="evidence" value="ECO:0007669"/>
    <property type="project" value="UniProtKB-UniRule"/>
</dbReference>
<dbReference type="FunFam" id="1.10.1760.20:FF:000001">
    <property type="entry name" value="Cobalt transport protein CbiM"/>
    <property type="match status" value="1"/>
</dbReference>
<dbReference type="Gene3D" id="1.10.1760.20">
    <property type="match status" value="1"/>
</dbReference>
<dbReference type="HAMAP" id="MF_01462">
    <property type="entry name" value="CbiM"/>
    <property type="match status" value="1"/>
</dbReference>
<dbReference type="InterPro" id="IPR018024">
    <property type="entry name" value="CbiM"/>
</dbReference>
<dbReference type="InterPro" id="IPR002751">
    <property type="entry name" value="CbiM/NikMN"/>
</dbReference>
<dbReference type="NCBIfam" id="TIGR00123">
    <property type="entry name" value="cbiM"/>
    <property type="match status" value="1"/>
</dbReference>
<dbReference type="NCBIfam" id="NF006184">
    <property type="entry name" value="PRK08319.1"/>
    <property type="match status" value="1"/>
</dbReference>
<dbReference type="PANTHER" id="PTHR43627">
    <property type="match status" value="1"/>
</dbReference>
<dbReference type="PANTHER" id="PTHR43627:SF1">
    <property type="entry name" value="COBALT TRANSPORT PROTEIN CBIM"/>
    <property type="match status" value="1"/>
</dbReference>
<dbReference type="Pfam" id="PF01891">
    <property type="entry name" value="CbiM"/>
    <property type="match status" value="1"/>
</dbReference>
<name>CBIM_MOOTA</name>
<accession>Q2RJ53</accession>
<keyword id="KW-1003">Cell membrane</keyword>
<keyword id="KW-0169">Cobalamin biosynthesis</keyword>
<keyword id="KW-0170">Cobalt</keyword>
<keyword id="KW-0171">Cobalt transport</keyword>
<keyword id="KW-0406">Ion transport</keyword>
<keyword id="KW-0472">Membrane</keyword>
<keyword id="KW-0732">Signal</keyword>
<keyword id="KW-0812">Transmembrane</keyword>
<keyword id="KW-1133">Transmembrane helix</keyword>
<keyword id="KW-0813">Transport</keyword>
<organism>
    <name type="scientific">Moorella thermoacetica (strain ATCC 39073 / JCM 9320)</name>
    <dbReference type="NCBI Taxonomy" id="264732"/>
    <lineage>
        <taxon>Bacteria</taxon>
        <taxon>Bacillati</taxon>
        <taxon>Bacillota</taxon>
        <taxon>Clostridia</taxon>
        <taxon>Moorellales</taxon>
        <taxon>Moorellaceae</taxon>
        <taxon>Moorella</taxon>
    </lineage>
</organism>
<feature type="signal peptide" evidence="1">
    <location>
        <begin position="1"/>
        <end position="25"/>
    </location>
</feature>
<feature type="chain" id="PRO_5000105775" description="Cobalt transport protein CbiM">
    <location>
        <begin position="26"/>
        <end position="259"/>
    </location>
</feature>
<feature type="transmembrane region" description="Helical" evidence="1">
    <location>
        <begin position="31"/>
        <end position="51"/>
    </location>
</feature>
<feature type="transmembrane region" description="Helical" evidence="1">
    <location>
        <begin position="68"/>
        <end position="88"/>
    </location>
</feature>
<feature type="transmembrane region" description="Helical" evidence="1">
    <location>
        <begin position="100"/>
        <end position="120"/>
    </location>
</feature>
<feature type="transmembrane region" description="Helical" evidence="1">
    <location>
        <begin position="132"/>
        <end position="152"/>
    </location>
</feature>
<feature type="transmembrane region" description="Helical" evidence="1">
    <location>
        <begin position="160"/>
        <end position="180"/>
    </location>
</feature>
<feature type="transmembrane region" description="Helical" evidence="1">
    <location>
        <begin position="206"/>
        <end position="226"/>
    </location>
</feature>
<protein>
    <recommendedName>
        <fullName evidence="1">Cobalt transport protein CbiM</fullName>
    </recommendedName>
    <alternativeName>
        <fullName evidence="1">Energy-coupling factor transporter probable substrate-capture protein CbiM</fullName>
        <shortName evidence="1">ECF transporter S component CbiM</shortName>
    </alternativeName>
</protein>
<gene>
    <name evidence="1" type="primary">cbiM</name>
    <name type="ordered locus">Moth_1222</name>
</gene>
<proteinExistence type="inferred from homology"/>
<comment type="function">
    <text evidence="1">Part of the energy-coupling factor (ECF) transporter complex CbiMNOQ involved in cobalt import.</text>
</comment>
<comment type="pathway">
    <text evidence="1">Cofactor biosynthesis; adenosylcobalamin biosynthesis.</text>
</comment>
<comment type="subunit">
    <text evidence="1">Forms an energy-coupling factor (ECF) transporter complex composed of an ATP-binding protein (A component, CbiO), a transmembrane protein (T component, CbiQ) and 2 possible substrate-capture proteins (S components, CbiM and CbiN) of unknown stoichimetry.</text>
</comment>
<comment type="subcellular location">
    <subcellularLocation>
        <location evidence="1">Cell membrane</location>
        <topology evidence="1">Multi-pass membrane protein</topology>
    </subcellularLocation>
</comment>
<comment type="similarity">
    <text evidence="1">Belongs to the CbiM family.</text>
</comment>